<proteinExistence type="inferred from homology"/>
<name>PPAX_BACAA</name>
<comment type="function">
    <text evidence="1">Hydrolyzes pyrophosphate formed during P-Ser-HPr dephosphorylation by HPrK/P. Might play a role in controlling the intracellular pyrophosphate pool.</text>
</comment>
<comment type="catalytic activity">
    <reaction evidence="1">
        <text>diphosphate + H2O = 2 phosphate + H(+)</text>
        <dbReference type="Rhea" id="RHEA:24576"/>
        <dbReference type="ChEBI" id="CHEBI:15377"/>
        <dbReference type="ChEBI" id="CHEBI:15378"/>
        <dbReference type="ChEBI" id="CHEBI:33019"/>
        <dbReference type="ChEBI" id="CHEBI:43474"/>
        <dbReference type="EC" id="3.6.1.1"/>
    </reaction>
</comment>
<comment type="cofactor">
    <cofactor evidence="1">
        <name>Mg(2+)</name>
        <dbReference type="ChEBI" id="CHEBI:18420"/>
    </cofactor>
</comment>
<comment type="similarity">
    <text evidence="1">Belongs to the HAD-like hydrolase superfamily. PpaX family.</text>
</comment>
<feature type="chain" id="PRO_1000165082" description="Pyrophosphatase PpaX">
    <location>
        <begin position="1"/>
        <end position="216"/>
    </location>
</feature>
<feature type="active site" description="Nucleophile" evidence="1">
    <location>
        <position position="9"/>
    </location>
</feature>
<organism>
    <name type="scientific">Bacillus anthracis (strain A0248)</name>
    <dbReference type="NCBI Taxonomy" id="592021"/>
    <lineage>
        <taxon>Bacteria</taxon>
        <taxon>Bacillati</taxon>
        <taxon>Bacillota</taxon>
        <taxon>Bacilli</taxon>
        <taxon>Bacillales</taxon>
        <taxon>Bacillaceae</taxon>
        <taxon>Bacillus</taxon>
        <taxon>Bacillus cereus group</taxon>
    </lineage>
</organism>
<evidence type="ECO:0000255" key="1">
    <source>
        <dbReference type="HAMAP-Rule" id="MF_01250"/>
    </source>
</evidence>
<reference key="1">
    <citation type="submission" date="2009-04" db="EMBL/GenBank/DDBJ databases">
        <title>Genome sequence of Bacillus anthracis A0248.</title>
        <authorList>
            <person name="Dodson R.J."/>
            <person name="Munk A.C."/>
            <person name="Bruce D."/>
            <person name="Detter C."/>
            <person name="Tapia R."/>
            <person name="Sutton G."/>
            <person name="Sims D."/>
            <person name="Brettin T."/>
        </authorList>
    </citation>
    <scope>NUCLEOTIDE SEQUENCE [LARGE SCALE GENOMIC DNA]</scope>
    <source>
        <strain>A0248</strain>
    </source>
</reference>
<sequence length="216" mass="24767">MKINTVLFDLDGTLINTNELIISSFLHTLHTYYPNQYKREDVLPFIGPSLHDTFSKIDESKVEELITSYRQFNHDHHDELVEEYETVYETVQELKKQGYKVGIVTTKARQTVEMGLKLSKLDEFFDVVVTIDDVEHVKPHPEPLQKALQLLDAKPEEALMVGDNHHDIVGGQNAGTKTAAVSWTLKGRAYLETYKPDFMLDKMSDLLLILSDMNRS</sequence>
<dbReference type="EC" id="3.6.1.1" evidence="1"/>
<dbReference type="EMBL" id="CP001598">
    <property type="protein sequence ID" value="ACQ48784.1"/>
    <property type="molecule type" value="Genomic_DNA"/>
</dbReference>
<dbReference type="RefSeq" id="WP_000700957.1">
    <property type="nucleotide sequence ID" value="NC_012659.1"/>
</dbReference>
<dbReference type="SMR" id="C3P0C8"/>
<dbReference type="GeneID" id="45024993"/>
<dbReference type="KEGG" id="bai:BAA_5420"/>
<dbReference type="HOGENOM" id="CLU_045011_19_3_9"/>
<dbReference type="GO" id="GO:0005829">
    <property type="term" value="C:cytosol"/>
    <property type="evidence" value="ECO:0007669"/>
    <property type="project" value="TreeGrafter"/>
</dbReference>
<dbReference type="GO" id="GO:0004427">
    <property type="term" value="F:inorganic diphosphate phosphatase activity"/>
    <property type="evidence" value="ECO:0007669"/>
    <property type="project" value="UniProtKB-UniRule"/>
</dbReference>
<dbReference type="GO" id="GO:0000287">
    <property type="term" value="F:magnesium ion binding"/>
    <property type="evidence" value="ECO:0007669"/>
    <property type="project" value="UniProtKB-UniRule"/>
</dbReference>
<dbReference type="GO" id="GO:0008967">
    <property type="term" value="F:phosphoglycolate phosphatase activity"/>
    <property type="evidence" value="ECO:0007669"/>
    <property type="project" value="TreeGrafter"/>
</dbReference>
<dbReference type="GO" id="GO:0006281">
    <property type="term" value="P:DNA repair"/>
    <property type="evidence" value="ECO:0007669"/>
    <property type="project" value="TreeGrafter"/>
</dbReference>
<dbReference type="CDD" id="cd02616">
    <property type="entry name" value="HAD_PPase"/>
    <property type="match status" value="1"/>
</dbReference>
<dbReference type="FunFam" id="3.40.50.1000:FF:000022">
    <property type="entry name" value="Phosphoglycolate phosphatase"/>
    <property type="match status" value="1"/>
</dbReference>
<dbReference type="FunFam" id="1.10.150.240:FF:000008">
    <property type="entry name" value="Pyrophosphatase PpaX"/>
    <property type="match status" value="1"/>
</dbReference>
<dbReference type="Gene3D" id="3.40.50.1000">
    <property type="entry name" value="HAD superfamily/HAD-like"/>
    <property type="match status" value="1"/>
</dbReference>
<dbReference type="Gene3D" id="1.10.150.240">
    <property type="entry name" value="Putative phosphatase, domain 2"/>
    <property type="match status" value="1"/>
</dbReference>
<dbReference type="HAMAP" id="MF_01250">
    <property type="entry name" value="Pyrophosphat_PpaX"/>
    <property type="match status" value="1"/>
</dbReference>
<dbReference type="InterPro" id="IPR050155">
    <property type="entry name" value="HAD-like_hydrolase_sf"/>
</dbReference>
<dbReference type="InterPro" id="IPR036412">
    <property type="entry name" value="HAD-like_sf"/>
</dbReference>
<dbReference type="InterPro" id="IPR006439">
    <property type="entry name" value="HAD-SF_hydro_IA"/>
</dbReference>
<dbReference type="InterPro" id="IPR006549">
    <property type="entry name" value="HAD-SF_hydro_IIIA"/>
</dbReference>
<dbReference type="InterPro" id="IPR041492">
    <property type="entry name" value="HAD_2"/>
</dbReference>
<dbReference type="InterPro" id="IPR023214">
    <property type="entry name" value="HAD_sf"/>
</dbReference>
<dbReference type="InterPro" id="IPR023198">
    <property type="entry name" value="PGP-like_dom2"/>
</dbReference>
<dbReference type="InterPro" id="IPR023733">
    <property type="entry name" value="Pyrophosphatase_Ppax"/>
</dbReference>
<dbReference type="NCBIfam" id="TIGR01549">
    <property type="entry name" value="HAD-SF-IA-v1"/>
    <property type="match status" value="1"/>
</dbReference>
<dbReference type="NCBIfam" id="TIGR01509">
    <property type="entry name" value="HAD-SF-IA-v3"/>
    <property type="match status" value="1"/>
</dbReference>
<dbReference type="NCBIfam" id="TIGR01662">
    <property type="entry name" value="HAD-SF-IIIA"/>
    <property type="match status" value="1"/>
</dbReference>
<dbReference type="NCBIfam" id="NF009804">
    <property type="entry name" value="PRK13288.1"/>
    <property type="match status" value="1"/>
</dbReference>
<dbReference type="PANTHER" id="PTHR43434">
    <property type="entry name" value="PHOSPHOGLYCOLATE PHOSPHATASE"/>
    <property type="match status" value="1"/>
</dbReference>
<dbReference type="PANTHER" id="PTHR43434:SF26">
    <property type="entry name" value="PYROPHOSPHATASE PPAX"/>
    <property type="match status" value="1"/>
</dbReference>
<dbReference type="Pfam" id="PF13419">
    <property type="entry name" value="HAD_2"/>
    <property type="match status" value="1"/>
</dbReference>
<dbReference type="PRINTS" id="PR00413">
    <property type="entry name" value="HADHALOGNASE"/>
</dbReference>
<dbReference type="SFLD" id="SFLDG01135">
    <property type="entry name" value="C1.5.6:_HAD__Beta-PGM__Phospha"/>
    <property type="match status" value="1"/>
</dbReference>
<dbReference type="SFLD" id="SFLDG01129">
    <property type="entry name" value="C1.5:_HAD__Beta-PGM__Phosphata"/>
    <property type="match status" value="1"/>
</dbReference>
<dbReference type="SUPFAM" id="SSF56784">
    <property type="entry name" value="HAD-like"/>
    <property type="match status" value="1"/>
</dbReference>
<gene>
    <name evidence="1" type="primary">ppaX</name>
    <name type="ordered locus">BAA_5420</name>
</gene>
<accession>C3P0C8</accession>
<protein>
    <recommendedName>
        <fullName evidence="1">Pyrophosphatase PpaX</fullName>
        <ecNumber evidence="1">3.6.1.1</ecNumber>
    </recommendedName>
</protein>
<keyword id="KW-0378">Hydrolase</keyword>
<keyword id="KW-0460">Magnesium</keyword>